<protein>
    <recommendedName>
        <fullName>Rho GDP-dissociation inhibitor 1</fullName>
        <shortName>Rho GDI 1</shortName>
    </recommendedName>
    <alternativeName>
        <fullName>Rho-GDI alpha</fullName>
    </alternativeName>
</protein>
<accession>Q4R4J0</accession>
<sequence>MAEQEPTAEQLAQIAAENEEDEHSVNYKPPAQKSIQEIQELDKDDESLRKYKEALLGRVAVSADPNVPNVVVTGLTLVCSSAPGPLELDLTGDLESFKKQSFVLKEGVEYRIKISFRVNREIVSGMKYIQHTYRKGVKIDKTDYMVGSYGPRAEEYEFLTPVEEAPKGMLARGSYSIKSRFTDDDKTDHLSWEWNLTIKKDWKD</sequence>
<dbReference type="EMBL" id="AB169904">
    <property type="protein sequence ID" value="BAE01985.1"/>
    <property type="molecule type" value="mRNA"/>
</dbReference>
<dbReference type="RefSeq" id="NP_001270796.1">
    <property type="nucleotide sequence ID" value="NM_001283867.1"/>
</dbReference>
<dbReference type="RefSeq" id="XP_045232403.1">
    <property type="nucleotide sequence ID" value="XM_045376468.2"/>
</dbReference>
<dbReference type="SMR" id="Q4R4J0"/>
<dbReference type="STRING" id="9541.ENSMFAP00000041456"/>
<dbReference type="GeneID" id="101866857"/>
<dbReference type="VEuPathDB" id="HostDB:ENSMFAG00000041442"/>
<dbReference type="eggNOG" id="KOG3205">
    <property type="taxonomic scope" value="Eukaryota"/>
</dbReference>
<dbReference type="OMA" id="HPDHHDE"/>
<dbReference type="Proteomes" id="UP000233100">
    <property type="component" value="Chromosome 16"/>
</dbReference>
<dbReference type="GO" id="GO:0005829">
    <property type="term" value="C:cytosol"/>
    <property type="evidence" value="ECO:0007669"/>
    <property type="project" value="TreeGrafter"/>
</dbReference>
<dbReference type="GO" id="GO:0016020">
    <property type="term" value="C:membrane"/>
    <property type="evidence" value="ECO:0007669"/>
    <property type="project" value="TreeGrafter"/>
</dbReference>
<dbReference type="GO" id="GO:0005096">
    <property type="term" value="F:GTPase activator activity"/>
    <property type="evidence" value="ECO:0007669"/>
    <property type="project" value="UniProtKB-KW"/>
</dbReference>
<dbReference type="GO" id="GO:0005094">
    <property type="term" value="F:Rho GDP-dissociation inhibitor activity"/>
    <property type="evidence" value="ECO:0007669"/>
    <property type="project" value="InterPro"/>
</dbReference>
<dbReference type="GO" id="GO:0007266">
    <property type="term" value="P:Rho protein signal transduction"/>
    <property type="evidence" value="ECO:0007669"/>
    <property type="project" value="InterPro"/>
</dbReference>
<dbReference type="GO" id="GO:0071526">
    <property type="term" value="P:semaphorin-plexin signaling pathway"/>
    <property type="evidence" value="ECO:0000250"/>
    <property type="project" value="UniProtKB"/>
</dbReference>
<dbReference type="FunFam" id="2.70.50.30:FF:000004">
    <property type="entry name" value="Rho GDP-dissociation inhibitor 1"/>
    <property type="match status" value="1"/>
</dbReference>
<dbReference type="Gene3D" id="2.70.50.30">
    <property type="entry name" value="Coagulation Factor XIII, subunit A, domain 1"/>
    <property type="match status" value="1"/>
</dbReference>
<dbReference type="InterPro" id="IPR014756">
    <property type="entry name" value="Ig_E-set"/>
</dbReference>
<dbReference type="InterPro" id="IPR000406">
    <property type="entry name" value="Rho_GDI"/>
</dbReference>
<dbReference type="InterPro" id="IPR024792">
    <property type="entry name" value="RhoGDI_dom_sf"/>
</dbReference>
<dbReference type="PANTHER" id="PTHR10980">
    <property type="entry name" value="RHO GDP-DISSOCIATION INHIBITOR"/>
    <property type="match status" value="1"/>
</dbReference>
<dbReference type="PANTHER" id="PTHR10980:SF9">
    <property type="entry name" value="RHO GDP-DISSOCIATION INHIBITOR 1"/>
    <property type="match status" value="1"/>
</dbReference>
<dbReference type="Pfam" id="PF02115">
    <property type="entry name" value="Rho_GDI"/>
    <property type="match status" value="1"/>
</dbReference>
<dbReference type="PRINTS" id="PR00492">
    <property type="entry name" value="RHOGDI"/>
</dbReference>
<dbReference type="SUPFAM" id="SSF81296">
    <property type="entry name" value="E set domains"/>
    <property type="match status" value="1"/>
</dbReference>
<reference key="1">
    <citation type="submission" date="2005-06" db="EMBL/GenBank/DDBJ databases">
        <title>DNA sequences of macaque genes expressed in brain or testis and its evolutionary implications.</title>
        <authorList>
            <consortium name="International consortium for macaque cDNA sequencing and analysis"/>
        </authorList>
    </citation>
    <scope>NUCLEOTIDE SEQUENCE [LARGE SCALE MRNA]</scope>
    <source>
        <tissue>Temporal cortex</tissue>
    </source>
</reference>
<organism>
    <name type="scientific">Macaca fascicularis</name>
    <name type="common">Crab-eating macaque</name>
    <name type="synonym">Cynomolgus monkey</name>
    <dbReference type="NCBI Taxonomy" id="9541"/>
    <lineage>
        <taxon>Eukaryota</taxon>
        <taxon>Metazoa</taxon>
        <taxon>Chordata</taxon>
        <taxon>Craniata</taxon>
        <taxon>Vertebrata</taxon>
        <taxon>Euteleostomi</taxon>
        <taxon>Mammalia</taxon>
        <taxon>Eutheria</taxon>
        <taxon>Euarchontoglires</taxon>
        <taxon>Primates</taxon>
        <taxon>Haplorrhini</taxon>
        <taxon>Catarrhini</taxon>
        <taxon>Cercopithecidae</taxon>
        <taxon>Cercopithecinae</taxon>
        <taxon>Macaca</taxon>
    </lineage>
</organism>
<proteinExistence type="evidence at transcript level"/>
<evidence type="ECO:0000250" key="1">
    <source>
        <dbReference type="UniProtKB" id="P52565"/>
    </source>
</evidence>
<evidence type="ECO:0000250" key="2">
    <source>
        <dbReference type="UniProtKB" id="Q99PT1"/>
    </source>
</evidence>
<evidence type="ECO:0000256" key="3">
    <source>
        <dbReference type="SAM" id="MobiDB-lite"/>
    </source>
</evidence>
<evidence type="ECO:0000305" key="4"/>
<keyword id="KW-0007">Acetylation</keyword>
<keyword id="KW-0963">Cytoplasm</keyword>
<keyword id="KW-0343">GTPase activation</keyword>
<keyword id="KW-1017">Isopeptide bond</keyword>
<keyword id="KW-0597">Phosphoprotein</keyword>
<keyword id="KW-1185">Reference proteome</keyword>
<keyword id="KW-0832">Ubl conjugation</keyword>
<name>GDIR1_MACFA</name>
<feature type="initiator methionine" description="Removed" evidence="1">
    <location>
        <position position="1"/>
    </location>
</feature>
<feature type="chain" id="PRO_0000318591" description="Rho GDP-dissociation inhibitor 1">
    <location>
        <begin position="2"/>
        <end position="204"/>
    </location>
</feature>
<feature type="region of interest" description="Disordered" evidence="3">
    <location>
        <begin position="1"/>
        <end position="36"/>
    </location>
</feature>
<feature type="modified residue" description="N-acetylalanine" evidence="1">
    <location>
        <position position="2"/>
    </location>
</feature>
<feature type="modified residue" description="Phosphoserine" evidence="2">
    <location>
        <position position="34"/>
    </location>
</feature>
<feature type="modified residue" description="N6-acetyllysine" evidence="2">
    <location>
        <position position="43"/>
    </location>
</feature>
<feature type="modified residue" description="Phosphoserine" evidence="1">
    <location>
        <position position="47"/>
    </location>
</feature>
<feature type="modified residue" description="N6-acetyllysine" evidence="1">
    <location>
        <position position="105"/>
    </location>
</feature>
<feature type="modified residue" description="N6-acetyllysine" evidence="1">
    <location>
        <position position="127"/>
    </location>
</feature>
<feature type="modified residue" description="N6-acetyllysine; alternate" evidence="1">
    <location>
        <position position="141"/>
    </location>
</feature>
<feature type="modified residue" description="N6-succinyllysine; alternate" evidence="2">
    <location>
        <position position="141"/>
    </location>
</feature>
<feature type="modified residue" description="N6-acetyllysine" evidence="1">
    <location>
        <position position="178"/>
    </location>
</feature>
<feature type="cross-link" description="Glycyl lysine isopeptide (Lys-Gly) (interchain with G-Cter in SUMO1); alternate" evidence="1">
    <location>
        <position position="138"/>
    </location>
</feature>
<feature type="cross-link" description="Glycyl lysine isopeptide (Lys-Gly) (interchain with G-Cter in SUMO2); alternate" evidence="1">
    <location>
        <position position="138"/>
    </location>
</feature>
<feature type="cross-link" description="Glycyl lysine isopeptide (Lys-Gly) (interchain with G-Cter in SUMO1); alternate" evidence="1">
    <location>
        <position position="141"/>
    </location>
</feature>
<feature type="cross-link" description="Glycyl lysine isopeptide (Lys-Gly) (interchain with G-Cter in SUMO2); alternate" evidence="1">
    <location>
        <position position="141"/>
    </location>
</feature>
<comment type="function">
    <text evidence="1 2">Controls Rho proteins homeostasis. Regulates the GDP/GTP exchange reaction of the Rho proteins by inhibiting the dissociation of GDP from them, and the subsequent binding of GTP to them. Retains Rho proteins such as CDC42, RAC1 and RHOA in an inactive cytosolic pool, regulating their stability and protecting them from degradation. Actively involved in the recycling and distribution of activated Rho GTPases in the cell, mediates extraction from membranes of both inactive and activated molecules due its exceptionally high affinity for prenylated forms. Through the modulation of Rho proteins, may play a role in cell motility regulation. In glioma cells, inhibits cell migration and invasion by mediating the signals of SEMA5A and PLXNB3 that lead to inactivation of RAC1.</text>
</comment>
<comment type="subunit">
    <text evidence="1 2">Monomer (By similarity). Interacts with FER (By similarity). Interacts with PLXNB3 (By similarity). Forms a heterodimer with RAC1. Interacts with RHOA, the affinity is increased by three orders of magnitude when RHOA is prenylated. Interacts with PSMD10; the interaction increases ARHGDIA association with RHOA, leading to ARHGDIA-mediated inactivation of RHOA and ROCK and prolonged AKT activation. Interacts with KANK2; the interaction is direct and may regulate the interaction of ARHGDIA with RHOA, RAC1 and CDC42. Interacts with RHOC. Interacts with CDC42 (By similarity). Interacts with NGFR (via death domain); NGFR binding decreases the affinity for RHOA (By similarity).</text>
</comment>
<comment type="subcellular location">
    <subcellularLocation>
        <location evidence="1">Cytoplasm</location>
    </subcellularLocation>
</comment>
<comment type="similarity">
    <text evidence="4">Belongs to the Rho GDI family.</text>
</comment>
<gene>
    <name type="primary">ARHGDIA</name>
    <name type="ORF">QtrA-11619</name>
</gene>